<organism>
    <name type="scientific">Mus musculus</name>
    <name type="common">Mouse</name>
    <dbReference type="NCBI Taxonomy" id="10090"/>
    <lineage>
        <taxon>Eukaryota</taxon>
        <taxon>Metazoa</taxon>
        <taxon>Chordata</taxon>
        <taxon>Craniata</taxon>
        <taxon>Vertebrata</taxon>
        <taxon>Euteleostomi</taxon>
        <taxon>Mammalia</taxon>
        <taxon>Eutheria</taxon>
        <taxon>Euarchontoglires</taxon>
        <taxon>Glires</taxon>
        <taxon>Rodentia</taxon>
        <taxon>Myomorpha</taxon>
        <taxon>Muroidea</taxon>
        <taxon>Muridae</taxon>
        <taxon>Murinae</taxon>
        <taxon>Mus</taxon>
        <taxon>Mus</taxon>
    </lineage>
</organism>
<accession>Q99JS0</accession>
<comment type="function">
    <text evidence="1">Plays a role in myelin formation.</text>
</comment>
<comment type="subcellular location">
    <subcellularLocation>
        <location evidence="4">Cell membrane</location>
        <topology evidence="4">Single-pass type I membrane protein</topology>
    </subcellularLocation>
    <text evidence="1">Localized mainly in the Schmidt-Lanterman incisures and paranodes of noncompact peripheral nerve myelin.</text>
</comment>
<comment type="tissue specificity">
    <text evidence="4">Found in the peripheral nervous system (PNS) Schwann cells (at protein level). Expressed in the PNS, primarily limited to Schwann cells.</text>
</comment>
<comment type="developmental stage">
    <text>Expressed in sciatic nerve and placenta at 15.5 dpc.</text>
</comment>
<comment type="induction">
    <text evidence="4">Up-regulated in Schwann cells by EGR2 during nerve development and after nerve injury.</text>
</comment>
<comment type="PTM">
    <text evidence="4">Glycosylated.</text>
</comment>
<evidence type="ECO:0000250" key="1"/>
<evidence type="ECO:0000255" key="2"/>
<evidence type="ECO:0000256" key="3">
    <source>
        <dbReference type="SAM" id="MobiDB-lite"/>
    </source>
</evidence>
<evidence type="ECO:0000269" key="4">
    <source>
    </source>
</evidence>
<feature type="chain" id="PRO_0000265079" description="Noncompact myelin-associated protein">
    <location>
        <begin position="1"/>
        <end position="100"/>
    </location>
</feature>
<feature type="topological domain" description="Extracellular" evidence="2">
    <location>
        <begin position="1"/>
        <end position="28"/>
    </location>
</feature>
<feature type="transmembrane region" description="Helical" evidence="2">
    <location>
        <begin position="29"/>
        <end position="49"/>
    </location>
</feature>
<feature type="topological domain" description="Cytoplasmic" evidence="2">
    <location>
        <begin position="50"/>
        <end position="100"/>
    </location>
</feature>
<feature type="region of interest" description="Disordered" evidence="3">
    <location>
        <begin position="58"/>
        <end position="100"/>
    </location>
</feature>
<keyword id="KW-1003">Cell membrane</keyword>
<keyword id="KW-0325">Glycoprotein</keyword>
<keyword id="KW-0472">Membrane</keyword>
<keyword id="KW-1185">Reference proteome</keyword>
<keyword id="KW-0812">Transmembrane</keyword>
<keyword id="KW-1133">Transmembrane helix</keyword>
<name>NCMAP_MOUSE</name>
<proteinExistence type="evidence at protein level"/>
<dbReference type="EMBL" id="AK014757">
    <property type="protein sequence ID" value="BAE20427.1"/>
    <property type="molecule type" value="mRNA"/>
</dbReference>
<dbReference type="EMBL" id="AK039485">
    <property type="protein sequence ID" value="BAC30364.1"/>
    <property type="molecule type" value="mRNA"/>
</dbReference>
<dbReference type="EMBL" id="AK076488">
    <property type="protein sequence ID" value="BAC36364.1"/>
    <property type="molecule type" value="mRNA"/>
</dbReference>
<dbReference type="EMBL" id="AK167453">
    <property type="protein sequence ID" value="BAE39539.1"/>
    <property type="molecule type" value="mRNA"/>
</dbReference>
<dbReference type="EMBL" id="BC005730">
    <property type="protein sequence ID" value="AAH05730.1"/>
    <property type="molecule type" value="mRNA"/>
</dbReference>
<dbReference type="CCDS" id="CCDS18784.1"/>
<dbReference type="RefSeq" id="NP_001161970.1">
    <property type="nucleotide sequence ID" value="NM_001168498.1"/>
</dbReference>
<dbReference type="RefSeq" id="NP_001161972.1">
    <property type="nucleotide sequence ID" value="NM_001168500.1"/>
</dbReference>
<dbReference type="RefSeq" id="NP_001230234.1">
    <property type="nucleotide sequence ID" value="NM_001243305.1"/>
</dbReference>
<dbReference type="RefSeq" id="NP_663530.1">
    <property type="nucleotide sequence ID" value="NM_145555.2"/>
</dbReference>
<dbReference type="RefSeq" id="NP_851390.1">
    <property type="nucleotide sequence ID" value="NM_181047.1"/>
</dbReference>
<dbReference type="RefSeq" id="XP_017175649.1">
    <property type="nucleotide sequence ID" value="XM_017320160.2"/>
</dbReference>
<dbReference type="RefSeq" id="XP_030109329.1">
    <property type="nucleotide sequence ID" value="XM_030253469.2"/>
</dbReference>
<dbReference type="SMR" id="Q99JS0"/>
<dbReference type="FunCoup" id="Q99JS0">
    <property type="interactions" value="4"/>
</dbReference>
<dbReference type="STRING" id="10090.ENSMUSP00000101486"/>
<dbReference type="PaxDb" id="10090-ENSMUSP00000101485"/>
<dbReference type="Antibodypedia" id="2689">
    <property type="antibodies" value="65 antibodies from 11 providers"/>
</dbReference>
<dbReference type="Ensembl" id="ENSMUST00000064481.15">
    <property type="protein sequence ID" value="ENSMUSP00000070780.9"/>
    <property type="gene ID" value="ENSMUSG00000043924.17"/>
</dbReference>
<dbReference type="Ensembl" id="ENSMUST00000105857.8">
    <property type="protein sequence ID" value="ENSMUSP00000101483.2"/>
    <property type="gene ID" value="ENSMUSG00000043924.17"/>
</dbReference>
<dbReference type="Ensembl" id="ENSMUST00000105858.8">
    <property type="protein sequence ID" value="ENSMUSP00000101484.2"/>
    <property type="gene ID" value="ENSMUSG00000043924.17"/>
</dbReference>
<dbReference type="Ensembl" id="ENSMUST00000105859.8">
    <property type="protein sequence ID" value="ENSMUSP00000101485.2"/>
    <property type="gene ID" value="ENSMUSG00000043924.17"/>
</dbReference>
<dbReference type="GeneID" id="230822"/>
<dbReference type="KEGG" id="mmu:230822"/>
<dbReference type="UCSC" id="uc008vgh.2">
    <property type="organism name" value="mouse"/>
</dbReference>
<dbReference type="AGR" id="MGI:2444888"/>
<dbReference type="CTD" id="400746"/>
<dbReference type="MGI" id="MGI:2444888">
    <property type="gene designation" value="Ncmap"/>
</dbReference>
<dbReference type="VEuPathDB" id="HostDB:ENSMUSG00000043924"/>
<dbReference type="eggNOG" id="ENOG502S4WJ">
    <property type="taxonomic scope" value="Eukaryota"/>
</dbReference>
<dbReference type="GeneTree" id="ENSGT00390000004116"/>
<dbReference type="InParanoid" id="Q99JS0"/>
<dbReference type="OMA" id="YNRKMRI"/>
<dbReference type="OrthoDB" id="9950350at2759"/>
<dbReference type="TreeFam" id="TF336902"/>
<dbReference type="BioGRID-ORCS" id="230822">
    <property type="hits" value="0 hits in 77 CRISPR screens"/>
</dbReference>
<dbReference type="ChiTaRS" id="Ncmap">
    <property type="organism name" value="mouse"/>
</dbReference>
<dbReference type="PRO" id="PR:Q99JS0"/>
<dbReference type="Proteomes" id="UP000000589">
    <property type="component" value="Chromosome 4"/>
</dbReference>
<dbReference type="RNAct" id="Q99JS0">
    <property type="molecule type" value="protein"/>
</dbReference>
<dbReference type="Bgee" id="ENSMUSG00000043924">
    <property type="expression patterns" value="Expressed in sciatic nerve and 146 other cell types or tissues"/>
</dbReference>
<dbReference type="ExpressionAtlas" id="Q99JS0">
    <property type="expression patterns" value="baseline and differential"/>
</dbReference>
<dbReference type="GO" id="GO:0033270">
    <property type="term" value="C:paranode region of axon"/>
    <property type="evidence" value="ECO:0000250"/>
    <property type="project" value="UniProtKB"/>
</dbReference>
<dbReference type="GO" id="GO:0005886">
    <property type="term" value="C:plasma membrane"/>
    <property type="evidence" value="ECO:0000314"/>
    <property type="project" value="UniProtKB"/>
</dbReference>
<dbReference type="GO" id="GO:0043220">
    <property type="term" value="C:Schmidt-Lanterman incisure"/>
    <property type="evidence" value="ECO:0000250"/>
    <property type="project" value="UniProtKB"/>
</dbReference>
<dbReference type="GO" id="GO:0019911">
    <property type="term" value="F:structural constituent of myelin sheath"/>
    <property type="evidence" value="ECO:0000250"/>
    <property type="project" value="UniProtKB"/>
</dbReference>
<dbReference type="GO" id="GO:0032290">
    <property type="term" value="P:peripheral nervous system myelin formation"/>
    <property type="evidence" value="ECO:0000250"/>
    <property type="project" value="UniProtKB"/>
</dbReference>
<dbReference type="GO" id="GO:0031643">
    <property type="term" value="P:positive regulation of myelination"/>
    <property type="evidence" value="ECO:0000250"/>
    <property type="project" value="UniProtKB"/>
</dbReference>
<dbReference type="InterPro" id="IPR038940">
    <property type="entry name" value="NCMAP"/>
</dbReference>
<dbReference type="PANTHER" id="PTHR35974">
    <property type="entry name" value="NONCOMPACT MYELIN-ASSOCIATED PROTEIN"/>
    <property type="match status" value="1"/>
</dbReference>
<dbReference type="PANTHER" id="PTHR35974:SF1">
    <property type="entry name" value="NONCOMPACT MYELIN-ASSOCIATED PROTEIN"/>
    <property type="match status" value="1"/>
</dbReference>
<gene>
    <name type="primary">Ncmap</name>
</gene>
<reference key="1">
    <citation type="journal article" date="2005" name="Science">
        <title>The transcriptional landscape of the mammalian genome.</title>
        <authorList>
            <person name="Carninci P."/>
            <person name="Kasukawa T."/>
            <person name="Katayama S."/>
            <person name="Gough J."/>
            <person name="Frith M.C."/>
            <person name="Maeda N."/>
            <person name="Oyama R."/>
            <person name="Ravasi T."/>
            <person name="Lenhard B."/>
            <person name="Wells C."/>
            <person name="Kodzius R."/>
            <person name="Shimokawa K."/>
            <person name="Bajic V.B."/>
            <person name="Brenner S.E."/>
            <person name="Batalov S."/>
            <person name="Forrest A.R."/>
            <person name="Zavolan M."/>
            <person name="Davis M.J."/>
            <person name="Wilming L.G."/>
            <person name="Aidinis V."/>
            <person name="Allen J.E."/>
            <person name="Ambesi-Impiombato A."/>
            <person name="Apweiler R."/>
            <person name="Aturaliya R.N."/>
            <person name="Bailey T.L."/>
            <person name="Bansal M."/>
            <person name="Baxter L."/>
            <person name="Beisel K.W."/>
            <person name="Bersano T."/>
            <person name="Bono H."/>
            <person name="Chalk A.M."/>
            <person name="Chiu K.P."/>
            <person name="Choudhary V."/>
            <person name="Christoffels A."/>
            <person name="Clutterbuck D.R."/>
            <person name="Crowe M.L."/>
            <person name="Dalla E."/>
            <person name="Dalrymple B.P."/>
            <person name="de Bono B."/>
            <person name="Della Gatta G."/>
            <person name="di Bernardo D."/>
            <person name="Down T."/>
            <person name="Engstrom P."/>
            <person name="Fagiolini M."/>
            <person name="Faulkner G."/>
            <person name="Fletcher C.F."/>
            <person name="Fukushima T."/>
            <person name="Furuno M."/>
            <person name="Futaki S."/>
            <person name="Gariboldi M."/>
            <person name="Georgii-Hemming P."/>
            <person name="Gingeras T.R."/>
            <person name="Gojobori T."/>
            <person name="Green R.E."/>
            <person name="Gustincich S."/>
            <person name="Harbers M."/>
            <person name="Hayashi Y."/>
            <person name="Hensch T.K."/>
            <person name="Hirokawa N."/>
            <person name="Hill D."/>
            <person name="Huminiecki L."/>
            <person name="Iacono M."/>
            <person name="Ikeo K."/>
            <person name="Iwama A."/>
            <person name="Ishikawa T."/>
            <person name="Jakt M."/>
            <person name="Kanapin A."/>
            <person name="Katoh M."/>
            <person name="Kawasawa Y."/>
            <person name="Kelso J."/>
            <person name="Kitamura H."/>
            <person name="Kitano H."/>
            <person name="Kollias G."/>
            <person name="Krishnan S.P."/>
            <person name="Kruger A."/>
            <person name="Kummerfeld S.K."/>
            <person name="Kurochkin I.V."/>
            <person name="Lareau L.F."/>
            <person name="Lazarevic D."/>
            <person name="Lipovich L."/>
            <person name="Liu J."/>
            <person name="Liuni S."/>
            <person name="McWilliam S."/>
            <person name="Madan Babu M."/>
            <person name="Madera M."/>
            <person name="Marchionni L."/>
            <person name="Matsuda H."/>
            <person name="Matsuzawa S."/>
            <person name="Miki H."/>
            <person name="Mignone F."/>
            <person name="Miyake S."/>
            <person name="Morris K."/>
            <person name="Mottagui-Tabar S."/>
            <person name="Mulder N."/>
            <person name="Nakano N."/>
            <person name="Nakauchi H."/>
            <person name="Ng P."/>
            <person name="Nilsson R."/>
            <person name="Nishiguchi S."/>
            <person name="Nishikawa S."/>
            <person name="Nori F."/>
            <person name="Ohara O."/>
            <person name="Okazaki Y."/>
            <person name="Orlando V."/>
            <person name="Pang K.C."/>
            <person name="Pavan W.J."/>
            <person name="Pavesi G."/>
            <person name="Pesole G."/>
            <person name="Petrovsky N."/>
            <person name="Piazza S."/>
            <person name="Reed J."/>
            <person name="Reid J.F."/>
            <person name="Ring B.Z."/>
            <person name="Ringwald M."/>
            <person name="Rost B."/>
            <person name="Ruan Y."/>
            <person name="Salzberg S.L."/>
            <person name="Sandelin A."/>
            <person name="Schneider C."/>
            <person name="Schoenbach C."/>
            <person name="Sekiguchi K."/>
            <person name="Semple C.A."/>
            <person name="Seno S."/>
            <person name="Sessa L."/>
            <person name="Sheng Y."/>
            <person name="Shibata Y."/>
            <person name="Shimada H."/>
            <person name="Shimada K."/>
            <person name="Silva D."/>
            <person name="Sinclair B."/>
            <person name="Sperling S."/>
            <person name="Stupka E."/>
            <person name="Sugiura K."/>
            <person name="Sultana R."/>
            <person name="Takenaka Y."/>
            <person name="Taki K."/>
            <person name="Tammoja K."/>
            <person name="Tan S.L."/>
            <person name="Tang S."/>
            <person name="Taylor M.S."/>
            <person name="Tegner J."/>
            <person name="Teichmann S.A."/>
            <person name="Ueda H.R."/>
            <person name="van Nimwegen E."/>
            <person name="Verardo R."/>
            <person name="Wei C.L."/>
            <person name="Yagi K."/>
            <person name="Yamanishi H."/>
            <person name="Zabarovsky E."/>
            <person name="Zhu S."/>
            <person name="Zimmer A."/>
            <person name="Hide W."/>
            <person name="Bult C."/>
            <person name="Grimmond S.M."/>
            <person name="Teasdale R.D."/>
            <person name="Liu E.T."/>
            <person name="Brusic V."/>
            <person name="Quackenbush J."/>
            <person name="Wahlestedt C."/>
            <person name="Mattick J.S."/>
            <person name="Hume D.A."/>
            <person name="Kai C."/>
            <person name="Sasaki D."/>
            <person name="Tomaru Y."/>
            <person name="Fukuda S."/>
            <person name="Kanamori-Katayama M."/>
            <person name="Suzuki M."/>
            <person name="Aoki J."/>
            <person name="Arakawa T."/>
            <person name="Iida J."/>
            <person name="Imamura K."/>
            <person name="Itoh M."/>
            <person name="Kato T."/>
            <person name="Kawaji H."/>
            <person name="Kawagashira N."/>
            <person name="Kawashima T."/>
            <person name="Kojima M."/>
            <person name="Kondo S."/>
            <person name="Konno H."/>
            <person name="Nakano K."/>
            <person name="Ninomiya N."/>
            <person name="Nishio T."/>
            <person name="Okada M."/>
            <person name="Plessy C."/>
            <person name="Shibata K."/>
            <person name="Shiraki T."/>
            <person name="Suzuki S."/>
            <person name="Tagami M."/>
            <person name="Waki K."/>
            <person name="Watahiki A."/>
            <person name="Okamura-Oho Y."/>
            <person name="Suzuki H."/>
            <person name="Kawai J."/>
            <person name="Hayashizaki Y."/>
        </authorList>
    </citation>
    <scope>NUCLEOTIDE SEQUENCE [LARGE SCALE MRNA]</scope>
    <source>
        <strain>C57BL/6J</strain>
        <tissue>Head</tissue>
        <tissue>Placenta</tissue>
        <tissue>Spinal cord</tissue>
    </source>
</reference>
<reference key="2">
    <citation type="journal article" date="2004" name="Genome Res.">
        <title>The status, quality, and expansion of the NIH full-length cDNA project: the Mammalian Gene Collection (MGC).</title>
        <authorList>
            <consortium name="The MGC Project Team"/>
        </authorList>
    </citation>
    <scope>NUCLEOTIDE SEQUENCE [LARGE SCALE MRNA]</scope>
    <source>
        <strain>FVB/N</strain>
        <tissue>Mammary tumor</tissue>
    </source>
</reference>
<reference key="3">
    <citation type="journal article" date="2008" name="J. Neurosci.">
        <title>Analysis of peripheral nerve expression profiles identifies a novel myelin glycoprotein, MP11.</title>
        <authorList>
            <person name="Ryu E.J."/>
            <person name="Yang M."/>
            <person name="Gustin J.A."/>
            <person name="Chang L.W."/>
            <person name="Freimuth R.R."/>
            <person name="Nagarajan R."/>
            <person name="Milbrandt J."/>
        </authorList>
    </citation>
    <scope>TOPOLOGY</scope>
    <scope>GLYCOSYLATION</scope>
    <scope>SUBCELLULAR LOCATION</scope>
    <scope>TISSUE SPECIFICITY</scope>
    <scope>INDUCTION</scope>
</reference>
<sequence>MTTATTLGDAVFSLNMTRGEDALYKSSGAIVAAIVVVVIIIVTLVLILLKMYNRRMRTRRELEPKSPKPPVPPALDPSSNGSQQPATVTFDPANVHVETR</sequence>
<protein>
    <recommendedName>
        <fullName>Noncompact myelin-associated protein</fullName>
    </recommendedName>
    <alternativeName>
        <fullName>Myelin protein of 11 kDa</fullName>
        <shortName>MP11</shortName>
    </alternativeName>
</protein>